<evidence type="ECO:0000255" key="1">
    <source>
        <dbReference type="HAMAP-Rule" id="MF_00106"/>
    </source>
</evidence>
<reference key="1">
    <citation type="journal article" date="2002" name="Proc. Natl. Acad. Sci. U.S.A.">
        <title>The Brucella suis genome reveals fundamental similarities between animal and plant pathogens and symbionts.</title>
        <authorList>
            <person name="Paulsen I.T."/>
            <person name="Seshadri R."/>
            <person name="Nelson K.E."/>
            <person name="Eisen J.A."/>
            <person name="Heidelberg J.F."/>
            <person name="Read T.D."/>
            <person name="Dodson R.J."/>
            <person name="Umayam L.A."/>
            <person name="Brinkac L.M."/>
            <person name="Beanan M.J."/>
            <person name="Daugherty S.C."/>
            <person name="DeBoy R.T."/>
            <person name="Durkin A.S."/>
            <person name="Kolonay J.F."/>
            <person name="Madupu R."/>
            <person name="Nelson W.C."/>
            <person name="Ayodeji B."/>
            <person name="Kraul M."/>
            <person name="Shetty J."/>
            <person name="Malek J.A."/>
            <person name="Van Aken S.E."/>
            <person name="Riedmuller S."/>
            <person name="Tettelin H."/>
            <person name="Gill S.R."/>
            <person name="White O."/>
            <person name="Salzberg S.L."/>
            <person name="Hoover D.L."/>
            <person name="Lindler L.E."/>
            <person name="Halling S.M."/>
            <person name="Boyle S.M."/>
            <person name="Fraser C.M."/>
        </authorList>
    </citation>
    <scope>NUCLEOTIDE SEQUENCE [LARGE SCALE GENOMIC DNA]</scope>
    <source>
        <strain>1330</strain>
    </source>
</reference>
<reference key="2">
    <citation type="journal article" date="2011" name="J. Bacteriol.">
        <title>Revised genome sequence of Brucella suis 1330.</title>
        <authorList>
            <person name="Tae H."/>
            <person name="Shallom S."/>
            <person name="Settlage R."/>
            <person name="Preston D."/>
            <person name="Adams L.G."/>
            <person name="Garner H.R."/>
        </authorList>
    </citation>
    <scope>NUCLEOTIDE SEQUENCE [LARGE SCALE GENOMIC DNA]</scope>
    <source>
        <strain>1330</strain>
    </source>
</reference>
<feature type="chain" id="PRO_0000170667" description="Mannonate dehydratase">
    <location>
        <begin position="1"/>
        <end position="401"/>
    </location>
</feature>
<keyword id="KW-0408">Iron</keyword>
<keyword id="KW-0456">Lyase</keyword>
<keyword id="KW-0464">Manganese</keyword>
<organism>
    <name type="scientific">Brucella suis biovar 1 (strain 1330)</name>
    <dbReference type="NCBI Taxonomy" id="204722"/>
    <lineage>
        <taxon>Bacteria</taxon>
        <taxon>Pseudomonadati</taxon>
        <taxon>Pseudomonadota</taxon>
        <taxon>Alphaproteobacteria</taxon>
        <taxon>Hyphomicrobiales</taxon>
        <taxon>Brucellaceae</taxon>
        <taxon>Brucella/Ochrobactrum group</taxon>
        <taxon>Brucella</taxon>
    </lineage>
</organism>
<name>UXUA_BRUSU</name>
<accession>Q8FVM2</accession>
<accession>G0KDH8</accession>
<proteinExistence type="inferred from homology"/>
<sequence length="401" mass="44445">MRQAWRWFGPEAGVPLDAVRQAGATDIVSALHEVPIGQEWTSAQIVERKNLIESTPTGRHPLTWSVVESIPVSDDIKRSGKAARHDIGAWIASMEALARNDIKVICYNFMPVVDWCRTDLDYITSTGATAMRFDQDRFAAFDLHILQRKGAEKDYSEEDRIAARAIFEAMDETEIEQLIVNIASALPGSTTEPLTIPAFREKLETYASIDAAHLRRNLVEFLEAVTPVADSLGVKLTLHPDDPPRSLFGLPRIASTEADYAAIFAAVPAQSNGMCFCTGSLGVRADNDLPAIARRFASRIHFSHLRATTREGDGRTFHEAAHLEGDVDMVGILRILLEEDRKRDAGQTIIFRSDHGHRMMDDLEKKVTPGYPVIGRMRGLAELRGIITALDACALEYDPNV</sequence>
<protein>
    <recommendedName>
        <fullName evidence="1">Mannonate dehydratase</fullName>
        <ecNumber evidence="1">4.2.1.8</ecNumber>
    </recommendedName>
    <alternativeName>
        <fullName evidence="1">D-mannonate hydro-lyase</fullName>
    </alternativeName>
</protein>
<dbReference type="EC" id="4.2.1.8" evidence="1"/>
<dbReference type="EMBL" id="AE014292">
    <property type="protein sequence ID" value="AAN33990.1"/>
    <property type="molecule type" value="Genomic_DNA"/>
</dbReference>
<dbReference type="EMBL" id="CP002998">
    <property type="protein sequence ID" value="AEM20266.1"/>
    <property type="molecule type" value="Genomic_DNA"/>
</dbReference>
<dbReference type="RefSeq" id="WP_004690313.1">
    <property type="nucleotide sequence ID" value="NZ_KN046805.1"/>
</dbReference>
<dbReference type="SMR" id="Q8FVM2"/>
<dbReference type="GeneID" id="97535099"/>
<dbReference type="KEGG" id="bms:BRA0814"/>
<dbReference type="KEGG" id="bsi:BS1330_II0807"/>
<dbReference type="PATRIC" id="fig|204722.22.peg.2186"/>
<dbReference type="HOGENOM" id="CLU_058621_2_0_5"/>
<dbReference type="PhylomeDB" id="Q8FVM2"/>
<dbReference type="UniPathway" id="UPA00246"/>
<dbReference type="Proteomes" id="UP000007104">
    <property type="component" value="Chromosome II"/>
</dbReference>
<dbReference type="GO" id="GO:0008198">
    <property type="term" value="F:ferrous iron binding"/>
    <property type="evidence" value="ECO:0007669"/>
    <property type="project" value="TreeGrafter"/>
</dbReference>
<dbReference type="GO" id="GO:0030145">
    <property type="term" value="F:manganese ion binding"/>
    <property type="evidence" value="ECO:0007669"/>
    <property type="project" value="TreeGrafter"/>
</dbReference>
<dbReference type="GO" id="GO:0008927">
    <property type="term" value="F:mannonate dehydratase activity"/>
    <property type="evidence" value="ECO:0007669"/>
    <property type="project" value="UniProtKB-UniRule"/>
</dbReference>
<dbReference type="GO" id="GO:0042840">
    <property type="term" value="P:D-glucuronate catabolic process"/>
    <property type="evidence" value="ECO:0007669"/>
    <property type="project" value="TreeGrafter"/>
</dbReference>
<dbReference type="Gene3D" id="3.20.20.150">
    <property type="entry name" value="Divalent-metal-dependent TIM barrel enzymes"/>
    <property type="match status" value="1"/>
</dbReference>
<dbReference type="HAMAP" id="MF_00106">
    <property type="entry name" value="UxuA"/>
    <property type="match status" value="1"/>
</dbReference>
<dbReference type="InterPro" id="IPR004628">
    <property type="entry name" value="Man_deHydtase"/>
</dbReference>
<dbReference type="InterPro" id="IPR036237">
    <property type="entry name" value="Xyl_isomerase-like_sf"/>
</dbReference>
<dbReference type="NCBIfam" id="NF003027">
    <property type="entry name" value="PRK03906.1"/>
    <property type="match status" value="1"/>
</dbReference>
<dbReference type="NCBIfam" id="TIGR00695">
    <property type="entry name" value="uxuA"/>
    <property type="match status" value="1"/>
</dbReference>
<dbReference type="PANTHER" id="PTHR30387">
    <property type="entry name" value="MANNONATE DEHYDRATASE"/>
    <property type="match status" value="1"/>
</dbReference>
<dbReference type="PANTHER" id="PTHR30387:SF2">
    <property type="entry name" value="MANNONATE DEHYDRATASE"/>
    <property type="match status" value="1"/>
</dbReference>
<dbReference type="Pfam" id="PF03786">
    <property type="entry name" value="UxuA"/>
    <property type="match status" value="1"/>
</dbReference>
<dbReference type="PIRSF" id="PIRSF016049">
    <property type="entry name" value="Man_dehyd"/>
    <property type="match status" value="1"/>
</dbReference>
<dbReference type="SUPFAM" id="SSF51658">
    <property type="entry name" value="Xylose isomerase-like"/>
    <property type="match status" value="1"/>
</dbReference>
<gene>
    <name evidence="1" type="primary">uxuA</name>
    <name type="ordered locus">BRA0814</name>
    <name type="ordered locus">BS1330_II0807</name>
</gene>
<comment type="function">
    <text evidence="1">Catalyzes the dehydration of D-mannonate.</text>
</comment>
<comment type="catalytic activity">
    <reaction evidence="1">
        <text>D-mannonate = 2-dehydro-3-deoxy-D-gluconate + H2O</text>
        <dbReference type="Rhea" id="RHEA:20097"/>
        <dbReference type="ChEBI" id="CHEBI:15377"/>
        <dbReference type="ChEBI" id="CHEBI:17767"/>
        <dbReference type="ChEBI" id="CHEBI:57990"/>
        <dbReference type="EC" id="4.2.1.8"/>
    </reaction>
</comment>
<comment type="cofactor">
    <cofactor evidence="1">
        <name>Fe(2+)</name>
        <dbReference type="ChEBI" id="CHEBI:29033"/>
    </cofactor>
    <cofactor evidence="1">
        <name>Mn(2+)</name>
        <dbReference type="ChEBI" id="CHEBI:29035"/>
    </cofactor>
</comment>
<comment type="pathway">
    <text evidence="1">Carbohydrate metabolism; pentose and glucuronate interconversion.</text>
</comment>
<comment type="similarity">
    <text evidence="1">Belongs to the mannonate dehydratase family.</text>
</comment>